<organism>
    <name type="scientific">Nitrosospira multiformis (strain ATCC 25196 / NCIMB 11849 / C 71)</name>
    <dbReference type="NCBI Taxonomy" id="323848"/>
    <lineage>
        <taxon>Bacteria</taxon>
        <taxon>Pseudomonadati</taxon>
        <taxon>Pseudomonadota</taxon>
        <taxon>Betaproteobacteria</taxon>
        <taxon>Nitrosomonadales</taxon>
        <taxon>Nitrosomonadaceae</taxon>
        <taxon>Nitrosospira</taxon>
    </lineage>
</organism>
<comment type="function">
    <text evidence="1">Binds directly to 16S ribosomal RNA.</text>
</comment>
<comment type="similarity">
    <text evidence="1">Belongs to the bacterial ribosomal protein bS20 family.</text>
</comment>
<proteinExistence type="inferred from homology"/>
<name>RS20_NITMU</name>
<sequence length="87" mass="9521">MANSAQARKRARQNISHRNRNMSLRSELRTAIKHVRKAIGSADKNTAQAAYQASVATIDSIADKGIIHKNKAARHKSRLSSAIKAMA</sequence>
<dbReference type="EMBL" id="CP000103">
    <property type="protein sequence ID" value="ABB74340.1"/>
    <property type="molecule type" value="Genomic_DNA"/>
</dbReference>
<dbReference type="RefSeq" id="WP_011380385.1">
    <property type="nucleotide sequence ID" value="NC_007614.1"/>
</dbReference>
<dbReference type="SMR" id="Q2YA81"/>
<dbReference type="STRING" id="323848.Nmul_A1037"/>
<dbReference type="KEGG" id="nmu:Nmul_A1037"/>
<dbReference type="eggNOG" id="COG0268">
    <property type="taxonomic scope" value="Bacteria"/>
</dbReference>
<dbReference type="HOGENOM" id="CLU_160655_4_0_4"/>
<dbReference type="OrthoDB" id="9807974at2"/>
<dbReference type="Proteomes" id="UP000002718">
    <property type="component" value="Chromosome"/>
</dbReference>
<dbReference type="GO" id="GO:0005829">
    <property type="term" value="C:cytosol"/>
    <property type="evidence" value="ECO:0007669"/>
    <property type="project" value="TreeGrafter"/>
</dbReference>
<dbReference type="GO" id="GO:0015935">
    <property type="term" value="C:small ribosomal subunit"/>
    <property type="evidence" value="ECO:0007669"/>
    <property type="project" value="TreeGrafter"/>
</dbReference>
<dbReference type="GO" id="GO:0070181">
    <property type="term" value="F:small ribosomal subunit rRNA binding"/>
    <property type="evidence" value="ECO:0007669"/>
    <property type="project" value="TreeGrafter"/>
</dbReference>
<dbReference type="GO" id="GO:0003735">
    <property type="term" value="F:structural constituent of ribosome"/>
    <property type="evidence" value="ECO:0007669"/>
    <property type="project" value="InterPro"/>
</dbReference>
<dbReference type="GO" id="GO:0006412">
    <property type="term" value="P:translation"/>
    <property type="evidence" value="ECO:0007669"/>
    <property type="project" value="UniProtKB-UniRule"/>
</dbReference>
<dbReference type="FunFam" id="1.20.58.110:FF:000001">
    <property type="entry name" value="30S ribosomal protein S20"/>
    <property type="match status" value="1"/>
</dbReference>
<dbReference type="Gene3D" id="1.20.58.110">
    <property type="entry name" value="Ribosomal protein S20"/>
    <property type="match status" value="1"/>
</dbReference>
<dbReference type="HAMAP" id="MF_00500">
    <property type="entry name" value="Ribosomal_bS20"/>
    <property type="match status" value="1"/>
</dbReference>
<dbReference type="InterPro" id="IPR002583">
    <property type="entry name" value="Ribosomal_bS20"/>
</dbReference>
<dbReference type="InterPro" id="IPR036510">
    <property type="entry name" value="Ribosomal_bS20_sf"/>
</dbReference>
<dbReference type="NCBIfam" id="TIGR00029">
    <property type="entry name" value="S20"/>
    <property type="match status" value="1"/>
</dbReference>
<dbReference type="PANTHER" id="PTHR33398">
    <property type="entry name" value="30S RIBOSOMAL PROTEIN S20"/>
    <property type="match status" value="1"/>
</dbReference>
<dbReference type="PANTHER" id="PTHR33398:SF1">
    <property type="entry name" value="SMALL RIBOSOMAL SUBUNIT PROTEIN BS20C"/>
    <property type="match status" value="1"/>
</dbReference>
<dbReference type="Pfam" id="PF01649">
    <property type="entry name" value="Ribosomal_S20p"/>
    <property type="match status" value="1"/>
</dbReference>
<dbReference type="SUPFAM" id="SSF46992">
    <property type="entry name" value="Ribosomal protein S20"/>
    <property type="match status" value="1"/>
</dbReference>
<evidence type="ECO:0000255" key="1">
    <source>
        <dbReference type="HAMAP-Rule" id="MF_00500"/>
    </source>
</evidence>
<evidence type="ECO:0000256" key="2">
    <source>
        <dbReference type="SAM" id="MobiDB-lite"/>
    </source>
</evidence>
<evidence type="ECO:0000305" key="3"/>
<reference key="1">
    <citation type="submission" date="2005-08" db="EMBL/GenBank/DDBJ databases">
        <title>Complete sequence of chromosome 1 of Nitrosospira multiformis ATCC 25196.</title>
        <authorList>
            <person name="Copeland A."/>
            <person name="Lucas S."/>
            <person name="Lapidus A."/>
            <person name="Barry K."/>
            <person name="Detter J.C."/>
            <person name="Glavina T."/>
            <person name="Hammon N."/>
            <person name="Israni S."/>
            <person name="Pitluck S."/>
            <person name="Chain P."/>
            <person name="Malfatti S."/>
            <person name="Shin M."/>
            <person name="Vergez L."/>
            <person name="Schmutz J."/>
            <person name="Larimer F."/>
            <person name="Land M."/>
            <person name="Hauser L."/>
            <person name="Kyrpides N."/>
            <person name="Lykidis A."/>
            <person name="Richardson P."/>
        </authorList>
    </citation>
    <scope>NUCLEOTIDE SEQUENCE [LARGE SCALE GENOMIC DNA]</scope>
    <source>
        <strain>ATCC 25196 / NCIMB 11849 / C 71</strain>
    </source>
</reference>
<protein>
    <recommendedName>
        <fullName evidence="1">Small ribosomal subunit protein bS20</fullName>
    </recommendedName>
    <alternativeName>
        <fullName evidence="3">30S ribosomal protein S20</fullName>
    </alternativeName>
</protein>
<feature type="chain" id="PRO_0000236443" description="Small ribosomal subunit protein bS20">
    <location>
        <begin position="1"/>
        <end position="87"/>
    </location>
</feature>
<feature type="region of interest" description="Disordered" evidence="2">
    <location>
        <begin position="1"/>
        <end position="25"/>
    </location>
</feature>
<feature type="compositionally biased region" description="Basic residues" evidence="2">
    <location>
        <begin position="7"/>
        <end position="20"/>
    </location>
</feature>
<keyword id="KW-1185">Reference proteome</keyword>
<keyword id="KW-0687">Ribonucleoprotein</keyword>
<keyword id="KW-0689">Ribosomal protein</keyword>
<keyword id="KW-0694">RNA-binding</keyword>
<keyword id="KW-0699">rRNA-binding</keyword>
<gene>
    <name evidence="1" type="primary">rpsT</name>
    <name type="ordered locus">Nmul_A1037</name>
</gene>
<accession>Q2YA81</accession>